<protein>
    <recommendedName>
        <fullName>Histone H2B</fullName>
    </recommendedName>
</protein>
<gene>
    <name type="primary">htbA</name>
    <name type="synonym">htb1</name>
    <name type="ORF">AN3469</name>
</gene>
<reference key="1">
    <citation type="journal article" date="1990" name="Mol. Gen. Genet.">
        <title>Sequence, organization and expression of the core histone genes of Aspergillus nidulans.</title>
        <authorList>
            <person name="Ehinger A."/>
            <person name="Denison S.H."/>
            <person name="May G.S."/>
        </authorList>
    </citation>
    <scope>NUCLEOTIDE SEQUENCE [GENOMIC DNA]</scope>
    <source>
        <strain>R153</strain>
    </source>
</reference>
<reference key="2">
    <citation type="journal article" date="2005" name="Nature">
        <title>Sequencing of Aspergillus nidulans and comparative analysis with A. fumigatus and A. oryzae.</title>
        <authorList>
            <person name="Galagan J.E."/>
            <person name="Calvo S.E."/>
            <person name="Cuomo C."/>
            <person name="Ma L.-J."/>
            <person name="Wortman J.R."/>
            <person name="Batzoglou S."/>
            <person name="Lee S.-I."/>
            <person name="Bastuerkmen M."/>
            <person name="Spevak C.C."/>
            <person name="Clutterbuck J."/>
            <person name="Kapitonov V."/>
            <person name="Jurka J."/>
            <person name="Scazzocchio C."/>
            <person name="Farman M.L."/>
            <person name="Butler J."/>
            <person name="Purcell S."/>
            <person name="Harris S."/>
            <person name="Braus G.H."/>
            <person name="Draht O."/>
            <person name="Busch S."/>
            <person name="D'Enfert C."/>
            <person name="Bouchier C."/>
            <person name="Goldman G.H."/>
            <person name="Bell-Pedersen D."/>
            <person name="Griffiths-Jones S."/>
            <person name="Doonan J.H."/>
            <person name="Yu J."/>
            <person name="Vienken K."/>
            <person name="Pain A."/>
            <person name="Freitag M."/>
            <person name="Selker E.U."/>
            <person name="Archer D.B."/>
            <person name="Penalva M.A."/>
            <person name="Oakley B.R."/>
            <person name="Momany M."/>
            <person name="Tanaka T."/>
            <person name="Kumagai T."/>
            <person name="Asai K."/>
            <person name="Machida M."/>
            <person name="Nierman W.C."/>
            <person name="Denning D.W."/>
            <person name="Caddick M.X."/>
            <person name="Hynes M."/>
            <person name="Paoletti M."/>
            <person name="Fischer R."/>
            <person name="Miller B.L."/>
            <person name="Dyer P.S."/>
            <person name="Sachs M.S."/>
            <person name="Osmani S.A."/>
            <person name="Birren B.W."/>
        </authorList>
    </citation>
    <scope>NUCLEOTIDE SEQUENCE [LARGE SCALE GENOMIC DNA]</scope>
    <source>
        <strain>FGSC A4 / ATCC 38163 / CBS 112.46 / NRRL 194 / M139</strain>
    </source>
</reference>
<reference key="3">
    <citation type="journal article" date="2009" name="Fungal Genet. Biol.">
        <title>The 2008 update of the Aspergillus nidulans genome annotation: a community effort.</title>
        <authorList>
            <person name="Wortman J.R."/>
            <person name="Gilsenan J.M."/>
            <person name="Joardar V."/>
            <person name="Deegan J."/>
            <person name="Clutterbuck J."/>
            <person name="Andersen M.R."/>
            <person name="Archer D."/>
            <person name="Bencina M."/>
            <person name="Braus G."/>
            <person name="Coutinho P."/>
            <person name="von Dohren H."/>
            <person name="Doonan J."/>
            <person name="Driessen A.J."/>
            <person name="Durek P."/>
            <person name="Espeso E."/>
            <person name="Fekete E."/>
            <person name="Flipphi M."/>
            <person name="Estrada C.G."/>
            <person name="Geysens S."/>
            <person name="Goldman G."/>
            <person name="de Groot P.W."/>
            <person name="Hansen K."/>
            <person name="Harris S.D."/>
            <person name="Heinekamp T."/>
            <person name="Helmstaedt K."/>
            <person name="Henrissat B."/>
            <person name="Hofmann G."/>
            <person name="Homan T."/>
            <person name="Horio T."/>
            <person name="Horiuchi H."/>
            <person name="James S."/>
            <person name="Jones M."/>
            <person name="Karaffa L."/>
            <person name="Karanyi Z."/>
            <person name="Kato M."/>
            <person name="Keller N."/>
            <person name="Kelly D.E."/>
            <person name="Kiel J.A."/>
            <person name="Kim J.M."/>
            <person name="van der Klei I.J."/>
            <person name="Klis F.M."/>
            <person name="Kovalchuk A."/>
            <person name="Krasevec N."/>
            <person name="Kubicek C.P."/>
            <person name="Liu B."/>
            <person name="Maccabe A."/>
            <person name="Meyer V."/>
            <person name="Mirabito P."/>
            <person name="Miskei M."/>
            <person name="Mos M."/>
            <person name="Mullins J."/>
            <person name="Nelson D.R."/>
            <person name="Nielsen J."/>
            <person name="Oakley B.R."/>
            <person name="Osmani S.A."/>
            <person name="Pakula T."/>
            <person name="Paszewski A."/>
            <person name="Paulsen I."/>
            <person name="Pilsyk S."/>
            <person name="Pocsi I."/>
            <person name="Punt P.J."/>
            <person name="Ram A.F."/>
            <person name="Ren Q."/>
            <person name="Robellet X."/>
            <person name="Robson G."/>
            <person name="Seiboth B."/>
            <person name="van Solingen P."/>
            <person name="Specht T."/>
            <person name="Sun J."/>
            <person name="Taheri-Talesh N."/>
            <person name="Takeshita N."/>
            <person name="Ussery D."/>
            <person name="vanKuyk P.A."/>
            <person name="Visser H."/>
            <person name="van de Vondervoort P.J."/>
            <person name="de Vries R.P."/>
            <person name="Walton J."/>
            <person name="Xiang X."/>
            <person name="Xiong Y."/>
            <person name="Zeng A.P."/>
            <person name="Brandt B.W."/>
            <person name="Cornell M.J."/>
            <person name="van den Hondel C.A."/>
            <person name="Visser J."/>
            <person name="Oliver S.G."/>
            <person name="Turner G."/>
        </authorList>
    </citation>
    <scope>GENOME REANNOTATION</scope>
    <source>
        <strain>FGSC A4 / ATCC 38163 / CBS 112.46 / NRRL 194 / M139</strain>
    </source>
</reference>
<organism>
    <name type="scientific">Emericella nidulans (strain FGSC A4 / ATCC 38163 / CBS 112.46 / NRRL 194 / M139)</name>
    <name type="common">Aspergillus nidulans</name>
    <dbReference type="NCBI Taxonomy" id="227321"/>
    <lineage>
        <taxon>Eukaryota</taxon>
        <taxon>Fungi</taxon>
        <taxon>Dikarya</taxon>
        <taxon>Ascomycota</taxon>
        <taxon>Pezizomycotina</taxon>
        <taxon>Eurotiomycetes</taxon>
        <taxon>Eurotiomycetidae</taxon>
        <taxon>Eurotiales</taxon>
        <taxon>Aspergillaceae</taxon>
        <taxon>Aspergillus</taxon>
        <taxon>Aspergillus subgen. Nidulantes</taxon>
    </lineage>
</organism>
<proteinExistence type="inferred from homology"/>
<dbReference type="EMBL" id="X55547">
    <property type="protein sequence ID" value="CAA39153.1"/>
    <property type="molecule type" value="Genomic_DNA"/>
</dbReference>
<dbReference type="EMBL" id="U12632">
    <property type="protein sequence ID" value="AAA20822.1"/>
    <property type="molecule type" value="Genomic_DNA"/>
</dbReference>
<dbReference type="EMBL" id="AACD01000058">
    <property type="protein sequence ID" value="EAA63009.1"/>
    <property type="molecule type" value="Genomic_DNA"/>
</dbReference>
<dbReference type="EMBL" id="BN001306">
    <property type="protein sequence ID" value="CBF82644.1"/>
    <property type="molecule type" value="Genomic_DNA"/>
</dbReference>
<dbReference type="PIR" id="S11937">
    <property type="entry name" value="S11937"/>
</dbReference>
<dbReference type="RefSeq" id="XP_661073.1">
    <property type="nucleotide sequence ID" value="XM_655981.1"/>
</dbReference>
<dbReference type="SMR" id="P23754"/>
<dbReference type="FunCoup" id="P23754">
    <property type="interactions" value="982"/>
</dbReference>
<dbReference type="STRING" id="227321.P23754"/>
<dbReference type="EnsemblFungi" id="CBF82644">
    <property type="protein sequence ID" value="CBF82644"/>
    <property type="gene ID" value="ANIA_03469"/>
</dbReference>
<dbReference type="KEGG" id="ani:ANIA_03469"/>
<dbReference type="VEuPathDB" id="FungiDB:AN3469"/>
<dbReference type="eggNOG" id="KOG1744">
    <property type="taxonomic scope" value="Eukaryota"/>
</dbReference>
<dbReference type="HOGENOM" id="CLU_075666_1_3_1"/>
<dbReference type="InParanoid" id="P23754"/>
<dbReference type="OMA" id="FCPFAIR"/>
<dbReference type="OrthoDB" id="10254238at2759"/>
<dbReference type="Proteomes" id="UP000000560">
    <property type="component" value="Chromosome VI"/>
</dbReference>
<dbReference type="GO" id="GO:0000786">
    <property type="term" value="C:nucleosome"/>
    <property type="evidence" value="ECO:0007669"/>
    <property type="project" value="UniProtKB-KW"/>
</dbReference>
<dbReference type="GO" id="GO:0005634">
    <property type="term" value="C:nucleus"/>
    <property type="evidence" value="ECO:0000314"/>
    <property type="project" value="AspGD"/>
</dbReference>
<dbReference type="GO" id="GO:0003677">
    <property type="term" value="F:DNA binding"/>
    <property type="evidence" value="ECO:0000318"/>
    <property type="project" value="GO_Central"/>
</dbReference>
<dbReference type="GO" id="GO:0046982">
    <property type="term" value="F:protein heterodimerization activity"/>
    <property type="evidence" value="ECO:0007669"/>
    <property type="project" value="InterPro"/>
</dbReference>
<dbReference type="GO" id="GO:0030527">
    <property type="term" value="F:structural constituent of chromatin"/>
    <property type="evidence" value="ECO:0007669"/>
    <property type="project" value="InterPro"/>
</dbReference>
<dbReference type="CDD" id="cd22910">
    <property type="entry name" value="HFD_H2B"/>
    <property type="match status" value="1"/>
</dbReference>
<dbReference type="FunFam" id="1.10.20.10:FF:000014">
    <property type="entry name" value="Histone H2B"/>
    <property type="match status" value="1"/>
</dbReference>
<dbReference type="Gene3D" id="1.10.20.10">
    <property type="entry name" value="Histone, subunit A"/>
    <property type="match status" value="1"/>
</dbReference>
<dbReference type="InterPro" id="IPR009072">
    <property type="entry name" value="Histone-fold"/>
</dbReference>
<dbReference type="InterPro" id="IPR007125">
    <property type="entry name" value="Histone_H2A/H2B/H3"/>
</dbReference>
<dbReference type="InterPro" id="IPR000558">
    <property type="entry name" value="Histone_H2B"/>
</dbReference>
<dbReference type="InterPro" id="IPR055333">
    <property type="entry name" value="HISTONE_H2B_site"/>
</dbReference>
<dbReference type="PANTHER" id="PTHR23428">
    <property type="entry name" value="HISTONE H2B"/>
    <property type="match status" value="1"/>
</dbReference>
<dbReference type="Pfam" id="PF00125">
    <property type="entry name" value="Histone"/>
    <property type="match status" value="1"/>
</dbReference>
<dbReference type="PRINTS" id="PR00621">
    <property type="entry name" value="HISTONEH2B"/>
</dbReference>
<dbReference type="SMART" id="SM00427">
    <property type="entry name" value="H2B"/>
    <property type="match status" value="1"/>
</dbReference>
<dbReference type="SUPFAM" id="SSF47113">
    <property type="entry name" value="Histone-fold"/>
    <property type="match status" value="1"/>
</dbReference>
<dbReference type="PROSITE" id="PS00357">
    <property type="entry name" value="HISTONE_H2B"/>
    <property type="match status" value="1"/>
</dbReference>
<comment type="function">
    <text>Core component of nucleosome. Nucleosomes wrap and compact DNA into chromatin, limiting DNA accessibility to the cellular machineries which require DNA as a template. Histones thereby play a central role in transcription regulation, DNA repair, DNA replication and chromosomal stability. DNA accessibility is regulated via a complex set of post-translational modifications of histones, also called histone code, and nucleosome remodeling.</text>
</comment>
<comment type="subunit">
    <text>The nucleosome is a histone octamer containing two molecules each of H2A, H2B, H3 and H4 assembled in one H3-H4 heterotetramer and two H2A-H2B heterodimers. The octamer wraps approximately 147 bp of DNA.</text>
</comment>
<comment type="subcellular location">
    <subcellularLocation>
        <location>Nucleus</location>
    </subcellularLocation>
    <subcellularLocation>
        <location>Chromosome</location>
    </subcellularLocation>
</comment>
<comment type="PTM">
    <text evidence="1">Monoubiquitinated by the ubc2-bre1 complex to form H2BK123ub1. H2BK123ub1 gives a specific tag for epigenetic transcriptional activation and is also prerequisite for H3K4me and H3K79me formation. H2BK123ub1 also modulates the formation of double-strand breaks during meiosis and is a prerequisite for DNA-damage checkpoint activation (By similarity).</text>
</comment>
<comment type="PTM">
    <text evidence="1">Acetylated by gcn5 to form H2BK11ac and H2BK16ac. H2BK16ac can also be formed by esa1. Acetylation of N-terminal lysines and particularly formation of H2BK11acK16ac has a positive effect on transcription (By similarity).</text>
</comment>
<comment type="PTM">
    <text evidence="1">Sumoylation to form H2BK6su or H2BK7su, and probably also H2BK16su or H2BK17su, occurs preferentially near the telomeres and represses gene transcription.</text>
</comment>
<comment type="similarity">
    <text evidence="3">Belongs to the histone H2B family.</text>
</comment>
<comment type="caution">
    <text evidence="3">To ensure consistency between histone entries, we follow the 'Brno' nomenclature for histone modifications, with positions referring to those used in the literature for the 'closest' model organism. Due to slight variations in histone sequences between organisms and to the presence of initiator methionine in UniProtKB/Swiss-Prot sequences, the actual positions of modified amino acids in the sequence generally differ. In this entry the following conventions are used: H2BK6ac = acetylated Lys-8; H2BK6su = sumoylated Lys-8; H2BK7ac = acetylated Lys-9; H2BK7su = sumoylated Lys-9; H2BK11ac = acetylated Lys-15; H2BK16ac = acetylated Lys-25; H2BK16su = sumoylated Lys-25; H2BK17su = sumoylated Lys-26; H2BK123ub1 = monoubiquitinated Lys-134.</text>
</comment>
<feature type="initiator methionine" description="Removed" evidence="1">
    <location>
        <position position="1"/>
    </location>
</feature>
<feature type="chain" id="PRO_0000071934" description="Histone H2B">
    <location>
        <begin position="2"/>
        <end position="140"/>
    </location>
</feature>
<feature type="region of interest" description="Disordered" evidence="2">
    <location>
        <begin position="1"/>
        <end position="48"/>
    </location>
</feature>
<feature type="compositionally biased region" description="Basic and acidic residues" evidence="2">
    <location>
        <begin position="1"/>
        <end position="10"/>
    </location>
</feature>
<feature type="compositionally biased region" description="Low complexity" evidence="2">
    <location>
        <begin position="11"/>
        <end position="21"/>
    </location>
</feature>
<feature type="modified residue" description="N6-acetyllysine; alternate" evidence="1">
    <location>
        <position position="8"/>
    </location>
</feature>
<feature type="modified residue" description="N6-acetyllysine; alternate" evidence="1">
    <location>
        <position position="9"/>
    </location>
</feature>
<feature type="modified residue" description="N6-acetyllysine" evidence="1">
    <location>
        <position position="15"/>
    </location>
</feature>
<feature type="modified residue" description="N6-acetyllysine; alternate" evidence="1">
    <location>
        <position position="25"/>
    </location>
</feature>
<feature type="cross-link" description="Glycyl lysine isopeptide (Lys-Gly) (interchain with G-Cter in SUMO); alternate" evidence="1">
    <location>
        <position position="8"/>
    </location>
</feature>
<feature type="cross-link" description="Glycyl lysine isopeptide (Lys-Gly) (interchain with G-Cter in SUMO); alternate" evidence="1">
    <location>
        <position position="9"/>
    </location>
</feature>
<feature type="cross-link" description="Glycyl lysine isopeptide (Lys-Gly) (interchain with G-Cter in SUMO); alternate" evidence="1">
    <location>
        <position position="25"/>
    </location>
</feature>
<feature type="cross-link" description="Glycyl lysine isopeptide (Lys-Gly) (interchain with G-Cter in SUMO)" evidence="1">
    <location>
        <position position="26"/>
    </location>
</feature>
<feature type="cross-link" description="Glycyl lysine isopeptide (Lys-Gly) (interchain with G-Cter in ubiquitin)" evidence="1">
    <location>
        <position position="134"/>
    </location>
</feature>
<feature type="sequence conflict" description="In Ref. 1; AAA20822." evidence="3" ref="1">
    <location>
        <begin position="82"/>
        <end position="85"/>
    </location>
</feature>
<accession>P23754</accession>
<accession>C8VH96</accession>
<accession>Q12606</accession>
<accession>Q5B7L1</accession>
<evidence type="ECO:0000250" key="1"/>
<evidence type="ECO:0000256" key="2">
    <source>
        <dbReference type="SAM" id="MobiDB-lite"/>
    </source>
</evidence>
<evidence type="ECO:0000305" key="3"/>
<name>H2B_EMENI</name>
<sequence>MPPKAAEKKPSTGGKAPAGKAPAEKKEAGKKTAAAASGEKKKRGKTRKETYSSYIYKVLKQVHPDTGISTRAMSILNSFVNDIFERVATEASKLAAYNKKSTISSREIQTSVRLILPGELAKHAVSEGTKAVTKYSSSAK</sequence>
<keyword id="KW-0007">Acetylation</keyword>
<keyword id="KW-0158">Chromosome</keyword>
<keyword id="KW-0238">DNA-binding</keyword>
<keyword id="KW-1017">Isopeptide bond</keyword>
<keyword id="KW-0544">Nucleosome core</keyword>
<keyword id="KW-0539">Nucleus</keyword>
<keyword id="KW-1185">Reference proteome</keyword>
<keyword id="KW-0832">Ubl conjugation</keyword>